<gene>
    <name evidence="1" type="primary">gppA</name>
    <name type="ordered locus">SPA3754</name>
</gene>
<name>GPPA_SALPA</name>
<keyword id="KW-0378">Hydrolase</keyword>
<sequence length="493" mass="54788">MNSTSLYAAIDLGSNSFHMLVVREAAGSIQTLTRIKRKVRLAAGLNNDNHLSAEAMERGWQCLRLFAERLQDIPQPQIRVVATATLRLAVNAGEFIAKAQTILGCPVQVISGEEEARLIYQGAAHTTGGADQRLVVDIGGASTELVTGTGAQTTSLFSLSMGCVTWLERYFSDRNLAQENFDDAEKAARDVLRPVADELRFHGWKVCVGASGTVQALQEIMMAQGMDERITLAKLQQLKQRAIQCGRLEELEIEGLTLERALVFPSGLAILIAIFTELNIQSMTLAGGALREGLVYGMLHLAVDQDIRSRTLRNIQRRFIVDTDQANRVAKLADNFLKQVENAWHIEPISRELLLSACQLHEIGLSVDFKQAPYHAAYLVRHLDLPGYTPAQKKLLATLLLNQTNPVDLSSLHQQNAVPPRVAEQLCRLLRLAILFAGRRRDDLVPEITLQALNENLTLTLPGDWLAHHPLGKELIDQESQWQSYVHWPLDVR</sequence>
<accession>Q5PKK4</accession>
<comment type="function">
    <text evidence="1">Catalyzes the conversion of pppGpp to ppGpp. Guanosine pentaphosphate (pppGpp) is a cytoplasmic signaling molecule which together with ppGpp controls the 'stringent response', an adaptive process that allows bacteria to respond to amino acid starvation, resulting in the coordinated regulation of numerous cellular activities.</text>
</comment>
<comment type="catalytic activity">
    <reaction evidence="1">
        <text>guanosine 3'-diphosphate 5'-triphosphate + H2O = guanosine 3',5'-bis(diphosphate) + phosphate + H(+)</text>
        <dbReference type="Rhea" id="RHEA:13073"/>
        <dbReference type="ChEBI" id="CHEBI:15377"/>
        <dbReference type="ChEBI" id="CHEBI:15378"/>
        <dbReference type="ChEBI" id="CHEBI:43474"/>
        <dbReference type="ChEBI" id="CHEBI:77828"/>
        <dbReference type="ChEBI" id="CHEBI:142410"/>
        <dbReference type="EC" id="3.6.1.40"/>
    </reaction>
</comment>
<comment type="pathway">
    <text evidence="1">Purine metabolism; ppGpp biosynthesis; ppGpp from GTP: step 2/2.</text>
</comment>
<comment type="similarity">
    <text evidence="1">Belongs to the GppA/Ppx family. GppA subfamily.</text>
</comment>
<proteinExistence type="inferred from homology"/>
<protein>
    <recommendedName>
        <fullName evidence="1">Guanosine-5'-triphosphate,3'-diphosphate pyrophosphatase</fullName>
        <ecNumber evidence="1">3.6.1.40</ecNumber>
    </recommendedName>
    <alternativeName>
        <fullName evidence="1">Guanosine pentaphosphate phosphohydrolase</fullName>
    </alternativeName>
    <alternativeName>
        <fullName evidence="1">pppGpp-5'-phosphohydrolase</fullName>
    </alternativeName>
</protein>
<reference key="1">
    <citation type="journal article" date="2004" name="Nat. Genet.">
        <title>Comparison of genome degradation in Paratyphi A and Typhi, human-restricted serovars of Salmonella enterica that cause typhoid.</title>
        <authorList>
            <person name="McClelland M."/>
            <person name="Sanderson K.E."/>
            <person name="Clifton S.W."/>
            <person name="Latreille P."/>
            <person name="Porwollik S."/>
            <person name="Sabo A."/>
            <person name="Meyer R."/>
            <person name="Bieri T."/>
            <person name="Ozersky P."/>
            <person name="McLellan M."/>
            <person name="Harkins C.R."/>
            <person name="Wang C."/>
            <person name="Nguyen C."/>
            <person name="Berghoff A."/>
            <person name="Elliott G."/>
            <person name="Kohlberg S."/>
            <person name="Strong C."/>
            <person name="Du F."/>
            <person name="Carter J."/>
            <person name="Kremizki C."/>
            <person name="Layman D."/>
            <person name="Leonard S."/>
            <person name="Sun H."/>
            <person name="Fulton L."/>
            <person name="Nash W."/>
            <person name="Miner T."/>
            <person name="Minx P."/>
            <person name="Delehaunty K."/>
            <person name="Fronick C."/>
            <person name="Magrini V."/>
            <person name="Nhan M."/>
            <person name="Warren W."/>
            <person name="Florea L."/>
            <person name="Spieth J."/>
            <person name="Wilson R.K."/>
        </authorList>
    </citation>
    <scope>NUCLEOTIDE SEQUENCE [LARGE SCALE GENOMIC DNA]</scope>
    <source>
        <strain>ATCC 9150 / SARB42</strain>
    </source>
</reference>
<organism>
    <name type="scientific">Salmonella paratyphi A (strain ATCC 9150 / SARB42)</name>
    <dbReference type="NCBI Taxonomy" id="295319"/>
    <lineage>
        <taxon>Bacteria</taxon>
        <taxon>Pseudomonadati</taxon>
        <taxon>Pseudomonadota</taxon>
        <taxon>Gammaproteobacteria</taxon>
        <taxon>Enterobacterales</taxon>
        <taxon>Enterobacteriaceae</taxon>
        <taxon>Salmonella</taxon>
    </lineage>
</organism>
<evidence type="ECO:0000255" key="1">
    <source>
        <dbReference type="HAMAP-Rule" id="MF_01550"/>
    </source>
</evidence>
<dbReference type="EC" id="3.6.1.40" evidence="1"/>
<dbReference type="EMBL" id="CP000026">
    <property type="protein sequence ID" value="AAV79537.1"/>
    <property type="molecule type" value="Genomic_DNA"/>
</dbReference>
<dbReference type="RefSeq" id="WP_001089445.1">
    <property type="nucleotide sequence ID" value="NC_006511.1"/>
</dbReference>
<dbReference type="SMR" id="Q5PKK4"/>
<dbReference type="KEGG" id="spt:SPA3754"/>
<dbReference type="HOGENOM" id="CLU_025908_4_0_6"/>
<dbReference type="UniPathway" id="UPA00908">
    <property type="reaction ID" value="UER00885"/>
</dbReference>
<dbReference type="Proteomes" id="UP000008185">
    <property type="component" value="Chromosome"/>
</dbReference>
<dbReference type="GO" id="GO:0008894">
    <property type="term" value="F:guanosine-5'-triphosphate,3'-diphosphate diphosphatase activity"/>
    <property type="evidence" value="ECO:0007669"/>
    <property type="project" value="UniProtKB-UniRule"/>
</dbReference>
<dbReference type="GO" id="GO:0015974">
    <property type="term" value="P:guanosine pentaphosphate catabolic process"/>
    <property type="evidence" value="ECO:0007669"/>
    <property type="project" value="InterPro"/>
</dbReference>
<dbReference type="GO" id="GO:0015970">
    <property type="term" value="P:guanosine tetraphosphate biosynthetic process"/>
    <property type="evidence" value="ECO:0007669"/>
    <property type="project" value="UniProtKB-UniRule"/>
</dbReference>
<dbReference type="GO" id="GO:0015949">
    <property type="term" value="P:nucleobase-containing small molecule interconversion"/>
    <property type="evidence" value="ECO:0007669"/>
    <property type="project" value="TreeGrafter"/>
</dbReference>
<dbReference type="CDD" id="cd24117">
    <property type="entry name" value="ASKHA_NBD_EcGppA-like"/>
    <property type="match status" value="1"/>
</dbReference>
<dbReference type="FunFam" id="1.10.3210.10:FF:000004">
    <property type="entry name" value="Guanosine-5'-triphosphate,3'-diphosphate pyrophosphatase"/>
    <property type="match status" value="1"/>
</dbReference>
<dbReference type="FunFam" id="3.30.420.150:FF:000001">
    <property type="entry name" value="Guanosine-5'-triphosphate,3'-diphosphate pyrophosphatase"/>
    <property type="match status" value="1"/>
</dbReference>
<dbReference type="FunFam" id="3.30.420.40:FF:000023">
    <property type="entry name" value="Guanosine-5'-triphosphate,3'-diphosphate pyrophosphatase"/>
    <property type="match status" value="1"/>
</dbReference>
<dbReference type="Gene3D" id="3.30.420.40">
    <property type="match status" value="1"/>
</dbReference>
<dbReference type="Gene3D" id="3.30.420.150">
    <property type="entry name" value="Exopolyphosphatase. Domain 2"/>
    <property type="match status" value="1"/>
</dbReference>
<dbReference type="Gene3D" id="1.10.3210.10">
    <property type="entry name" value="Hypothetical protein af1432"/>
    <property type="match status" value="1"/>
</dbReference>
<dbReference type="HAMAP" id="MF_01550">
    <property type="entry name" value="GppA"/>
    <property type="match status" value="1"/>
</dbReference>
<dbReference type="InterPro" id="IPR043129">
    <property type="entry name" value="ATPase_NBD"/>
</dbReference>
<dbReference type="InterPro" id="IPR050273">
    <property type="entry name" value="GppA/Ppx_hydrolase"/>
</dbReference>
<dbReference type="InterPro" id="IPR023709">
    <property type="entry name" value="Guo-5TP_3DP_PyrP"/>
</dbReference>
<dbReference type="InterPro" id="IPR048950">
    <property type="entry name" value="Ppx_GppA_C"/>
</dbReference>
<dbReference type="InterPro" id="IPR003695">
    <property type="entry name" value="Ppx_GppA_N"/>
</dbReference>
<dbReference type="InterPro" id="IPR030673">
    <property type="entry name" value="PyroPPase_GppA_Ppx"/>
</dbReference>
<dbReference type="NCBIfam" id="NF008260">
    <property type="entry name" value="PRK11031.1"/>
    <property type="match status" value="1"/>
</dbReference>
<dbReference type="PANTHER" id="PTHR30005">
    <property type="entry name" value="EXOPOLYPHOSPHATASE"/>
    <property type="match status" value="1"/>
</dbReference>
<dbReference type="PANTHER" id="PTHR30005:SF0">
    <property type="entry name" value="RETROGRADE REGULATION PROTEIN 2"/>
    <property type="match status" value="1"/>
</dbReference>
<dbReference type="Pfam" id="PF02541">
    <property type="entry name" value="Ppx-GppA"/>
    <property type="match status" value="1"/>
</dbReference>
<dbReference type="Pfam" id="PF21447">
    <property type="entry name" value="Ppx-GppA_III"/>
    <property type="match status" value="1"/>
</dbReference>
<dbReference type="PIRSF" id="PIRSF001267">
    <property type="entry name" value="Pyrophosphatase_GppA_Ppx"/>
    <property type="match status" value="1"/>
</dbReference>
<dbReference type="SUPFAM" id="SSF53067">
    <property type="entry name" value="Actin-like ATPase domain"/>
    <property type="match status" value="2"/>
</dbReference>
<dbReference type="SUPFAM" id="SSF109604">
    <property type="entry name" value="HD-domain/PDEase-like"/>
    <property type="match status" value="1"/>
</dbReference>
<feature type="chain" id="PRO_0000194287" description="Guanosine-5'-triphosphate,3'-diphosphate pyrophosphatase">
    <location>
        <begin position="1"/>
        <end position="493"/>
    </location>
</feature>